<organism>
    <name type="scientific">Listeria innocua serovar 6a (strain ATCC BAA-680 / CLIP 11262)</name>
    <dbReference type="NCBI Taxonomy" id="272626"/>
    <lineage>
        <taxon>Bacteria</taxon>
        <taxon>Bacillati</taxon>
        <taxon>Bacillota</taxon>
        <taxon>Bacilli</taxon>
        <taxon>Bacillales</taxon>
        <taxon>Listeriaceae</taxon>
        <taxon>Listeria</taxon>
    </lineage>
</organism>
<comment type="function">
    <text evidence="1">The glycine cleavage system catalyzes the degradation of glycine. The P protein binds the alpha-amino group of glycine through its pyridoxal phosphate cofactor; CO(2) is released and the remaining methylamine moiety is then transferred to the lipoamide cofactor of the H protein.</text>
</comment>
<comment type="catalytic activity">
    <reaction evidence="1">
        <text>N(6)-[(R)-lipoyl]-L-lysyl-[glycine-cleavage complex H protein] + glycine + H(+) = N(6)-[(R)-S(8)-aminomethyldihydrolipoyl]-L-lysyl-[glycine-cleavage complex H protein] + CO2</text>
        <dbReference type="Rhea" id="RHEA:24304"/>
        <dbReference type="Rhea" id="RHEA-COMP:10494"/>
        <dbReference type="Rhea" id="RHEA-COMP:10495"/>
        <dbReference type="ChEBI" id="CHEBI:15378"/>
        <dbReference type="ChEBI" id="CHEBI:16526"/>
        <dbReference type="ChEBI" id="CHEBI:57305"/>
        <dbReference type="ChEBI" id="CHEBI:83099"/>
        <dbReference type="ChEBI" id="CHEBI:83143"/>
        <dbReference type="EC" id="1.4.4.2"/>
    </reaction>
</comment>
<comment type="cofactor">
    <cofactor evidence="1">
        <name>pyridoxal 5'-phosphate</name>
        <dbReference type="ChEBI" id="CHEBI:597326"/>
    </cofactor>
</comment>
<comment type="subunit">
    <text evidence="1">The glycine cleavage system is composed of four proteins: P, T, L and H. In this organism, the P 'protein' is a heterodimer of two subunits.</text>
</comment>
<comment type="similarity">
    <text evidence="1">Belongs to the GcvP family. C-terminal subunit subfamily.</text>
</comment>
<feature type="chain" id="PRO_0000167005" description="Probable glycine dehydrogenase (decarboxylating) subunit 2">
    <location>
        <begin position="1"/>
        <end position="488"/>
    </location>
</feature>
<feature type="modified residue" description="N6-(pyridoxal phosphate)lysine" evidence="1">
    <location>
        <position position="274"/>
    </location>
</feature>
<evidence type="ECO:0000255" key="1">
    <source>
        <dbReference type="HAMAP-Rule" id="MF_00713"/>
    </source>
</evidence>
<name>GCSPB_LISIN</name>
<protein>
    <recommendedName>
        <fullName evidence="1">Probable glycine dehydrogenase (decarboxylating) subunit 2</fullName>
        <ecNumber evidence="1">1.4.4.2</ecNumber>
    </recommendedName>
    <alternativeName>
        <fullName evidence="1">Glycine cleavage system P-protein subunit 2</fullName>
    </alternativeName>
    <alternativeName>
        <fullName evidence="1">Glycine decarboxylase subunit 2</fullName>
    </alternativeName>
    <alternativeName>
        <fullName evidence="1">Glycine dehydrogenase (aminomethyl-transferring) subunit 2</fullName>
    </alternativeName>
</protein>
<dbReference type="EC" id="1.4.4.2" evidence="1"/>
<dbReference type="EMBL" id="AL596168">
    <property type="protein sequence ID" value="CAC96618.1"/>
    <property type="molecule type" value="Genomic_DNA"/>
</dbReference>
<dbReference type="PIR" id="AB1606">
    <property type="entry name" value="AB1606"/>
</dbReference>
<dbReference type="RefSeq" id="WP_010991511.1">
    <property type="nucleotide sequence ID" value="NC_003212.1"/>
</dbReference>
<dbReference type="SMR" id="Q92C04"/>
<dbReference type="STRING" id="272626.gene:17565718"/>
<dbReference type="GeneID" id="93234767"/>
<dbReference type="KEGG" id="lin:lin1387"/>
<dbReference type="eggNOG" id="COG1003">
    <property type="taxonomic scope" value="Bacteria"/>
</dbReference>
<dbReference type="HOGENOM" id="CLU_004620_5_0_9"/>
<dbReference type="OrthoDB" id="9801272at2"/>
<dbReference type="Proteomes" id="UP000002513">
    <property type="component" value="Chromosome"/>
</dbReference>
<dbReference type="GO" id="GO:0005829">
    <property type="term" value="C:cytosol"/>
    <property type="evidence" value="ECO:0007669"/>
    <property type="project" value="TreeGrafter"/>
</dbReference>
<dbReference type="GO" id="GO:0005960">
    <property type="term" value="C:glycine cleavage complex"/>
    <property type="evidence" value="ECO:0007669"/>
    <property type="project" value="TreeGrafter"/>
</dbReference>
<dbReference type="GO" id="GO:0016594">
    <property type="term" value="F:glycine binding"/>
    <property type="evidence" value="ECO:0007669"/>
    <property type="project" value="TreeGrafter"/>
</dbReference>
<dbReference type="GO" id="GO:0004375">
    <property type="term" value="F:glycine dehydrogenase (decarboxylating) activity"/>
    <property type="evidence" value="ECO:0007669"/>
    <property type="project" value="UniProtKB-EC"/>
</dbReference>
<dbReference type="GO" id="GO:0030170">
    <property type="term" value="F:pyridoxal phosphate binding"/>
    <property type="evidence" value="ECO:0007669"/>
    <property type="project" value="TreeGrafter"/>
</dbReference>
<dbReference type="GO" id="GO:0019464">
    <property type="term" value="P:glycine decarboxylation via glycine cleavage system"/>
    <property type="evidence" value="ECO:0007669"/>
    <property type="project" value="UniProtKB-UniRule"/>
</dbReference>
<dbReference type="CDD" id="cd00613">
    <property type="entry name" value="GDC-P"/>
    <property type="match status" value="1"/>
</dbReference>
<dbReference type="FunFam" id="3.40.640.10:FF:000034">
    <property type="entry name" value="Probable glycine dehydrogenase (decarboxylating) subunit 2"/>
    <property type="match status" value="1"/>
</dbReference>
<dbReference type="FunFam" id="3.90.1150.10:FF:000014">
    <property type="entry name" value="Probable glycine dehydrogenase (decarboxylating) subunit 2"/>
    <property type="match status" value="1"/>
</dbReference>
<dbReference type="Gene3D" id="6.20.440.10">
    <property type="match status" value="1"/>
</dbReference>
<dbReference type="Gene3D" id="3.90.1150.10">
    <property type="entry name" value="Aspartate Aminotransferase, domain 1"/>
    <property type="match status" value="1"/>
</dbReference>
<dbReference type="Gene3D" id="3.40.640.10">
    <property type="entry name" value="Type I PLP-dependent aspartate aminotransferase-like (Major domain)"/>
    <property type="match status" value="1"/>
</dbReference>
<dbReference type="HAMAP" id="MF_00713">
    <property type="entry name" value="GcvPB"/>
    <property type="match status" value="1"/>
</dbReference>
<dbReference type="InterPro" id="IPR023012">
    <property type="entry name" value="GcvPB"/>
</dbReference>
<dbReference type="InterPro" id="IPR049316">
    <property type="entry name" value="GDC-P_C"/>
</dbReference>
<dbReference type="InterPro" id="IPR049315">
    <property type="entry name" value="GDC-P_N"/>
</dbReference>
<dbReference type="InterPro" id="IPR020581">
    <property type="entry name" value="GDC_P"/>
</dbReference>
<dbReference type="InterPro" id="IPR015424">
    <property type="entry name" value="PyrdxlP-dep_Trfase"/>
</dbReference>
<dbReference type="InterPro" id="IPR015421">
    <property type="entry name" value="PyrdxlP-dep_Trfase_major"/>
</dbReference>
<dbReference type="InterPro" id="IPR015422">
    <property type="entry name" value="PyrdxlP-dep_Trfase_small"/>
</dbReference>
<dbReference type="NCBIfam" id="NF003346">
    <property type="entry name" value="PRK04366.1"/>
    <property type="match status" value="1"/>
</dbReference>
<dbReference type="PANTHER" id="PTHR11773:SF1">
    <property type="entry name" value="GLYCINE DEHYDROGENASE (DECARBOXYLATING), MITOCHONDRIAL"/>
    <property type="match status" value="1"/>
</dbReference>
<dbReference type="PANTHER" id="PTHR11773">
    <property type="entry name" value="GLYCINE DEHYDROGENASE, DECARBOXYLATING"/>
    <property type="match status" value="1"/>
</dbReference>
<dbReference type="Pfam" id="PF21478">
    <property type="entry name" value="GcvP2_C"/>
    <property type="match status" value="1"/>
</dbReference>
<dbReference type="Pfam" id="PF02347">
    <property type="entry name" value="GDC-P"/>
    <property type="match status" value="1"/>
</dbReference>
<dbReference type="SUPFAM" id="SSF53383">
    <property type="entry name" value="PLP-dependent transferases"/>
    <property type="match status" value="1"/>
</dbReference>
<reference key="1">
    <citation type="journal article" date="2001" name="Science">
        <title>Comparative genomics of Listeria species.</title>
        <authorList>
            <person name="Glaser P."/>
            <person name="Frangeul L."/>
            <person name="Buchrieser C."/>
            <person name="Rusniok C."/>
            <person name="Amend A."/>
            <person name="Baquero F."/>
            <person name="Berche P."/>
            <person name="Bloecker H."/>
            <person name="Brandt P."/>
            <person name="Chakraborty T."/>
            <person name="Charbit A."/>
            <person name="Chetouani F."/>
            <person name="Couve E."/>
            <person name="de Daruvar A."/>
            <person name="Dehoux P."/>
            <person name="Domann E."/>
            <person name="Dominguez-Bernal G."/>
            <person name="Duchaud E."/>
            <person name="Durant L."/>
            <person name="Dussurget O."/>
            <person name="Entian K.-D."/>
            <person name="Fsihi H."/>
            <person name="Garcia-del Portillo F."/>
            <person name="Garrido P."/>
            <person name="Gautier L."/>
            <person name="Goebel W."/>
            <person name="Gomez-Lopez N."/>
            <person name="Hain T."/>
            <person name="Hauf J."/>
            <person name="Jackson D."/>
            <person name="Jones L.-M."/>
            <person name="Kaerst U."/>
            <person name="Kreft J."/>
            <person name="Kuhn M."/>
            <person name="Kunst F."/>
            <person name="Kurapkat G."/>
            <person name="Madueno E."/>
            <person name="Maitournam A."/>
            <person name="Mata Vicente J."/>
            <person name="Ng E."/>
            <person name="Nedjari H."/>
            <person name="Nordsiek G."/>
            <person name="Novella S."/>
            <person name="de Pablos B."/>
            <person name="Perez-Diaz J.-C."/>
            <person name="Purcell R."/>
            <person name="Remmel B."/>
            <person name="Rose M."/>
            <person name="Schlueter T."/>
            <person name="Simoes N."/>
            <person name="Tierrez A."/>
            <person name="Vazquez-Boland J.-A."/>
            <person name="Voss H."/>
            <person name="Wehland J."/>
            <person name="Cossart P."/>
        </authorList>
    </citation>
    <scope>NUCLEOTIDE SEQUENCE [LARGE SCALE GENOMIC DNA]</scope>
    <source>
        <strain>ATCC BAA-680 / CLIP 11262</strain>
    </source>
</reference>
<accession>Q92C04</accession>
<sequence>MNLEETMPLVFERSIPGRIGFSLPESDVPETNAGDYFDEAYLRSTPADLPELSELEIMRHYTNLSNHNFGVDSGFYPLGSCTMKYNPKINEKVARFPGFANIHPNQPESSVQGALELLYDLQTSLVEITGMDEVTLQPAAGAHGEWTGLMLIRAFHEKNGDTKRTKVIIPDSAHGTNPASAAVAGFDVVTVKSNEKGLVDVADLKKVVGEDTAALMLTNPNTLGLFEKDIVEMAEIVHAAGGKLYYDGANLNAIMAKVRPGDMGFDVVHLNLHKTFTGPHGGGGPGSGPIGVKKELIPFLPTPVLTKKDDAYTFDYNYPDSIGRVKPYYGNFGINVRAYTYIRTMGPDGLKLVTEYAVLNANYMMRKLQDAYDLPFDQVCKHEFVLSGNRQKKLGVRTVDIAKRLLDHNFHPPTVYFPLIVGEAIMIEPTETESKETLDSFIDTMLKIAKEAEENPEIVQEAPHSTYVKRLDETRAARKPVLRYQKEV</sequence>
<proteinExistence type="inferred from homology"/>
<gene>
    <name evidence="1" type="primary">gcvPB</name>
    <name type="ordered locus">lin1387</name>
</gene>
<keyword id="KW-0560">Oxidoreductase</keyword>
<keyword id="KW-0663">Pyridoxal phosphate</keyword>